<feature type="chain" id="PRO_0000165804" description="Probable cytosol aminopeptidase">
    <location>
        <begin position="1"/>
        <end position="487"/>
    </location>
</feature>
<feature type="active site" evidence="1">
    <location>
        <position position="265"/>
    </location>
</feature>
<feature type="active site" evidence="1">
    <location>
        <position position="341"/>
    </location>
</feature>
<feature type="binding site" evidence="1">
    <location>
        <position position="253"/>
    </location>
    <ligand>
        <name>Mn(2+)</name>
        <dbReference type="ChEBI" id="CHEBI:29035"/>
        <label>2</label>
    </ligand>
</feature>
<feature type="binding site" evidence="1">
    <location>
        <position position="258"/>
    </location>
    <ligand>
        <name>Mn(2+)</name>
        <dbReference type="ChEBI" id="CHEBI:29035"/>
        <label>1</label>
    </ligand>
</feature>
<feature type="binding site" evidence="1">
    <location>
        <position position="258"/>
    </location>
    <ligand>
        <name>Mn(2+)</name>
        <dbReference type="ChEBI" id="CHEBI:29035"/>
        <label>2</label>
    </ligand>
</feature>
<feature type="binding site" evidence="1">
    <location>
        <position position="277"/>
    </location>
    <ligand>
        <name>Mn(2+)</name>
        <dbReference type="ChEBI" id="CHEBI:29035"/>
        <label>2</label>
    </ligand>
</feature>
<feature type="binding site" evidence="1">
    <location>
        <position position="337"/>
    </location>
    <ligand>
        <name>Mn(2+)</name>
        <dbReference type="ChEBI" id="CHEBI:29035"/>
        <label>1</label>
    </ligand>
</feature>
<feature type="binding site" evidence="1">
    <location>
        <position position="339"/>
    </location>
    <ligand>
        <name>Mn(2+)</name>
        <dbReference type="ChEBI" id="CHEBI:29035"/>
        <label>1</label>
    </ligand>
</feature>
<feature type="binding site" evidence="1">
    <location>
        <position position="339"/>
    </location>
    <ligand>
        <name>Mn(2+)</name>
        <dbReference type="ChEBI" id="CHEBI:29035"/>
        <label>2</label>
    </ligand>
</feature>
<dbReference type="EC" id="3.4.11.1" evidence="1"/>
<dbReference type="EC" id="3.4.11.10" evidence="1"/>
<dbReference type="EMBL" id="BX569690">
    <property type="protein sequence ID" value="CAE07077.1"/>
    <property type="molecule type" value="Genomic_DNA"/>
</dbReference>
<dbReference type="RefSeq" id="WP_011127431.1">
    <property type="nucleotide sequence ID" value="NC_005070.1"/>
</dbReference>
<dbReference type="SMR" id="Q7U8Q1"/>
<dbReference type="STRING" id="84588.SYNW0562"/>
<dbReference type="KEGG" id="syw:SYNW0562"/>
<dbReference type="eggNOG" id="COG0260">
    <property type="taxonomic scope" value="Bacteria"/>
</dbReference>
<dbReference type="HOGENOM" id="CLU_013734_5_1_3"/>
<dbReference type="Proteomes" id="UP000001422">
    <property type="component" value="Chromosome"/>
</dbReference>
<dbReference type="GO" id="GO:0005737">
    <property type="term" value="C:cytoplasm"/>
    <property type="evidence" value="ECO:0007669"/>
    <property type="project" value="UniProtKB-SubCell"/>
</dbReference>
<dbReference type="GO" id="GO:0030145">
    <property type="term" value="F:manganese ion binding"/>
    <property type="evidence" value="ECO:0007669"/>
    <property type="project" value="UniProtKB-UniRule"/>
</dbReference>
<dbReference type="GO" id="GO:0070006">
    <property type="term" value="F:metalloaminopeptidase activity"/>
    <property type="evidence" value="ECO:0007669"/>
    <property type="project" value="InterPro"/>
</dbReference>
<dbReference type="GO" id="GO:0006508">
    <property type="term" value="P:proteolysis"/>
    <property type="evidence" value="ECO:0007669"/>
    <property type="project" value="UniProtKB-KW"/>
</dbReference>
<dbReference type="CDD" id="cd00433">
    <property type="entry name" value="Peptidase_M17"/>
    <property type="match status" value="1"/>
</dbReference>
<dbReference type="Gene3D" id="3.40.220.10">
    <property type="entry name" value="Leucine Aminopeptidase, subunit E, domain 1"/>
    <property type="match status" value="1"/>
</dbReference>
<dbReference type="Gene3D" id="3.40.630.10">
    <property type="entry name" value="Zn peptidases"/>
    <property type="match status" value="1"/>
</dbReference>
<dbReference type="HAMAP" id="MF_00181">
    <property type="entry name" value="Cytosol_peptidase_M17"/>
    <property type="match status" value="1"/>
</dbReference>
<dbReference type="InterPro" id="IPR011356">
    <property type="entry name" value="Leucine_aapep/pepB"/>
</dbReference>
<dbReference type="InterPro" id="IPR043472">
    <property type="entry name" value="Macro_dom-like"/>
</dbReference>
<dbReference type="InterPro" id="IPR000819">
    <property type="entry name" value="Peptidase_M17_C"/>
</dbReference>
<dbReference type="InterPro" id="IPR023042">
    <property type="entry name" value="Peptidase_M17_leu_NH2_pept"/>
</dbReference>
<dbReference type="InterPro" id="IPR008283">
    <property type="entry name" value="Peptidase_M17_N"/>
</dbReference>
<dbReference type="NCBIfam" id="NF002073">
    <property type="entry name" value="PRK00913.1-2"/>
    <property type="match status" value="1"/>
</dbReference>
<dbReference type="NCBIfam" id="NF002076">
    <property type="entry name" value="PRK00913.2-3"/>
    <property type="match status" value="1"/>
</dbReference>
<dbReference type="PANTHER" id="PTHR11963:SF23">
    <property type="entry name" value="CYTOSOL AMINOPEPTIDASE"/>
    <property type="match status" value="1"/>
</dbReference>
<dbReference type="PANTHER" id="PTHR11963">
    <property type="entry name" value="LEUCINE AMINOPEPTIDASE-RELATED"/>
    <property type="match status" value="1"/>
</dbReference>
<dbReference type="Pfam" id="PF00883">
    <property type="entry name" value="Peptidase_M17"/>
    <property type="match status" value="1"/>
</dbReference>
<dbReference type="Pfam" id="PF02789">
    <property type="entry name" value="Peptidase_M17_N"/>
    <property type="match status" value="1"/>
</dbReference>
<dbReference type="PRINTS" id="PR00481">
    <property type="entry name" value="LAMNOPPTDASE"/>
</dbReference>
<dbReference type="SUPFAM" id="SSF52949">
    <property type="entry name" value="Macro domain-like"/>
    <property type="match status" value="1"/>
</dbReference>
<dbReference type="SUPFAM" id="SSF53187">
    <property type="entry name" value="Zn-dependent exopeptidases"/>
    <property type="match status" value="1"/>
</dbReference>
<dbReference type="PROSITE" id="PS00631">
    <property type="entry name" value="CYTOSOL_AP"/>
    <property type="match status" value="1"/>
</dbReference>
<comment type="function">
    <text evidence="1">Presumably involved in the processing and regular turnover of intracellular proteins. Catalyzes the removal of unsubstituted N-terminal amino acids from various peptides.</text>
</comment>
<comment type="catalytic activity">
    <reaction evidence="1">
        <text>Release of an N-terminal amino acid, Xaa-|-Yaa-, in which Xaa is preferably Leu, but may be other amino acids including Pro although not Arg or Lys, and Yaa may be Pro. Amino acid amides and methyl esters are also readily hydrolyzed, but rates on arylamides are exceedingly low.</text>
        <dbReference type="EC" id="3.4.11.1"/>
    </reaction>
</comment>
<comment type="catalytic activity">
    <reaction evidence="1">
        <text>Release of an N-terminal amino acid, preferentially leucine, but not glutamic or aspartic acids.</text>
        <dbReference type="EC" id="3.4.11.10"/>
    </reaction>
</comment>
<comment type="cofactor">
    <cofactor evidence="1">
        <name>Mn(2+)</name>
        <dbReference type="ChEBI" id="CHEBI:29035"/>
    </cofactor>
    <text evidence="1">Binds 2 manganese ions per subunit.</text>
</comment>
<comment type="subcellular location">
    <subcellularLocation>
        <location evidence="1">Cytoplasm</location>
    </subcellularLocation>
</comment>
<comment type="similarity">
    <text evidence="1">Belongs to the peptidase M17 family.</text>
</comment>
<proteinExistence type="inferred from homology"/>
<protein>
    <recommendedName>
        <fullName evidence="1">Probable cytosol aminopeptidase</fullName>
        <ecNumber evidence="1">3.4.11.1</ecNumber>
    </recommendedName>
    <alternativeName>
        <fullName evidence="1">Leucine aminopeptidase</fullName>
        <shortName evidence="1">LAP</shortName>
        <ecNumber evidence="1">3.4.11.10</ecNumber>
    </alternativeName>
    <alternativeName>
        <fullName evidence="1">Leucyl aminopeptidase</fullName>
    </alternativeName>
</protein>
<sequence length="487" mass="50608">MRFSLSTTGLQDWNGDVLVVGLLQDQPATDLEARFPGLGAALAQQQFKGKPSEQLLINRLGNNGPQRLVVLGLGPANAFNLDGVRSAAARAAKAASGHTGSLGLQLSWDGLEPTAAAAAAAEAARLALYADQRFRKAPEPRRQPEALELIGLPATAAAGLQTVDATCAGVELARELVAAPPNVVTPAALAETAAELARNHGLELTVLERADCEARGMGAFLCVSQGSDLDPKLIHLIYRPDGEVKRRVALVGKGLTFDSGGYNLKVGAAQIDMMKFDMGGSAAVLGAMRSIAERKPAGVEVHMIVASCENMINGSAVHPGDIVTAADGTTIEINNTDAEGRLTLADALLYASEQKPDAVVDLATLTGACVIALGDEMAGLWSNNDGLATALQQAADAGGEGLWRMPLRASYKEGLKSKLADFKNTGPRPGGSITAALFLEHFVGDGIAWAHIDIAGTVWSDKGRGLDPAGATGYGVRTLANWICNPE</sequence>
<reference key="1">
    <citation type="journal article" date="2003" name="Nature">
        <title>The genome of a motile marine Synechococcus.</title>
        <authorList>
            <person name="Palenik B."/>
            <person name="Brahamsha B."/>
            <person name="Larimer F.W."/>
            <person name="Land M.L."/>
            <person name="Hauser L."/>
            <person name="Chain P."/>
            <person name="Lamerdin J.E."/>
            <person name="Regala W."/>
            <person name="Allen E.E."/>
            <person name="McCarren J."/>
            <person name="Paulsen I.T."/>
            <person name="Dufresne A."/>
            <person name="Partensky F."/>
            <person name="Webb E.A."/>
            <person name="Waterbury J."/>
        </authorList>
    </citation>
    <scope>NUCLEOTIDE SEQUENCE [LARGE SCALE GENOMIC DNA]</scope>
    <source>
        <strain>WH8102</strain>
    </source>
</reference>
<name>AMPA_PARMW</name>
<organism>
    <name type="scientific">Parasynechococcus marenigrum (strain WH8102)</name>
    <dbReference type="NCBI Taxonomy" id="84588"/>
    <lineage>
        <taxon>Bacteria</taxon>
        <taxon>Bacillati</taxon>
        <taxon>Cyanobacteriota</taxon>
        <taxon>Cyanophyceae</taxon>
        <taxon>Synechococcales</taxon>
        <taxon>Prochlorococcaceae</taxon>
        <taxon>Parasynechococcus</taxon>
        <taxon>Parasynechococcus marenigrum</taxon>
    </lineage>
</organism>
<accession>Q7U8Q1</accession>
<keyword id="KW-0031">Aminopeptidase</keyword>
<keyword id="KW-0963">Cytoplasm</keyword>
<keyword id="KW-0378">Hydrolase</keyword>
<keyword id="KW-0464">Manganese</keyword>
<keyword id="KW-0479">Metal-binding</keyword>
<keyword id="KW-0645">Protease</keyword>
<evidence type="ECO:0000255" key="1">
    <source>
        <dbReference type="HAMAP-Rule" id="MF_00181"/>
    </source>
</evidence>
<gene>
    <name evidence="1" type="primary">pepA</name>
    <name type="ordered locus">SYNW0562</name>
</gene>